<feature type="chain" id="PRO_0000104019" description="Uncharacterized protein Mb2337">
    <location>
        <begin position="1"/>
        <end position="114"/>
    </location>
</feature>
<proteinExistence type="predicted"/>
<keyword id="KW-1185">Reference proteome</keyword>
<protein>
    <recommendedName>
        <fullName>Uncharacterized protein Mb2337</fullName>
    </recommendedName>
</protein>
<reference key="1">
    <citation type="journal article" date="2003" name="Proc. Natl. Acad. Sci. U.S.A.">
        <title>The complete genome sequence of Mycobacterium bovis.</title>
        <authorList>
            <person name="Garnier T."/>
            <person name="Eiglmeier K."/>
            <person name="Camus J.-C."/>
            <person name="Medina N."/>
            <person name="Mansoor H."/>
            <person name="Pryor M."/>
            <person name="Duthoy S."/>
            <person name="Grondin S."/>
            <person name="Lacroix C."/>
            <person name="Monsempe C."/>
            <person name="Simon S."/>
            <person name="Harris B."/>
            <person name="Atkin R."/>
            <person name="Doggett J."/>
            <person name="Mayes R."/>
            <person name="Keating L."/>
            <person name="Wheeler P.R."/>
            <person name="Parkhill J."/>
            <person name="Barrell B.G."/>
            <person name="Cole S.T."/>
            <person name="Gordon S.V."/>
            <person name="Hewinson R.G."/>
        </authorList>
    </citation>
    <scope>NUCLEOTIDE SEQUENCE [LARGE SCALE GENOMIC DNA]</scope>
    <source>
        <strain>ATCC BAA-935 / AF2122/97</strain>
    </source>
</reference>
<reference key="2">
    <citation type="journal article" date="2017" name="Genome Announc.">
        <title>Updated reference genome sequence and annotation of Mycobacterium bovis AF2122/97.</title>
        <authorList>
            <person name="Malone K.M."/>
            <person name="Farrell D."/>
            <person name="Stuber T.P."/>
            <person name="Schubert O.T."/>
            <person name="Aebersold R."/>
            <person name="Robbe-Austerman S."/>
            <person name="Gordon S.V."/>
        </authorList>
    </citation>
    <scope>NUCLEOTIDE SEQUENCE [LARGE SCALE GENOMIC DNA]</scope>
    <scope>GENOME REANNOTATION</scope>
    <source>
        <strain>ATCC BAA-935 / AF2122/97</strain>
    </source>
</reference>
<dbReference type="EMBL" id="LT708304">
    <property type="protein sequence ID" value="SIU00949.1"/>
    <property type="molecule type" value="Genomic_DNA"/>
</dbReference>
<dbReference type="RefSeq" id="NP_855986.1">
    <property type="nucleotide sequence ID" value="NC_002945.3"/>
</dbReference>
<dbReference type="SMR" id="P64988"/>
<dbReference type="KEGG" id="mbo:BQ2027_MB2337"/>
<dbReference type="PATRIC" id="fig|233413.5.peg.2563"/>
<dbReference type="Proteomes" id="UP000001419">
    <property type="component" value="Chromosome"/>
</dbReference>
<dbReference type="GO" id="GO:0003677">
    <property type="term" value="F:DNA binding"/>
    <property type="evidence" value="ECO:0007669"/>
    <property type="project" value="InterPro"/>
</dbReference>
<dbReference type="Gene3D" id="1.10.1660.10">
    <property type="match status" value="1"/>
</dbReference>
<dbReference type="InterPro" id="IPR009061">
    <property type="entry name" value="DNA-bd_dom_put_sf"/>
</dbReference>
<dbReference type="InterPro" id="IPR041657">
    <property type="entry name" value="HTH_17"/>
</dbReference>
<dbReference type="InterPro" id="IPR010093">
    <property type="entry name" value="SinI_DNA-bd"/>
</dbReference>
<dbReference type="NCBIfam" id="TIGR01764">
    <property type="entry name" value="excise"/>
    <property type="match status" value="1"/>
</dbReference>
<dbReference type="Pfam" id="PF12728">
    <property type="entry name" value="HTH_17"/>
    <property type="match status" value="1"/>
</dbReference>
<dbReference type="SUPFAM" id="SSF46955">
    <property type="entry name" value="Putative DNA-binding domain"/>
    <property type="match status" value="1"/>
</dbReference>
<accession>P64988</accession>
<accession>A0A1R3Y0U7</accession>
<accession>P71902</accession>
<accession>X2BKA7</accession>
<gene>
    <name type="ordered locus">BQ2027_MB2337</name>
</gene>
<name>Y2337_MYCBO</name>
<organism>
    <name type="scientific">Mycobacterium bovis (strain ATCC BAA-935 / AF2122/97)</name>
    <dbReference type="NCBI Taxonomy" id="233413"/>
    <lineage>
        <taxon>Bacteria</taxon>
        <taxon>Bacillati</taxon>
        <taxon>Actinomycetota</taxon>
        <taxon>Actinomycetes</taxon>
        <taxon>Mycobacteriales</taxon>
        <taxon>Mycobacteriaceae</taxon>
        <taxon>Mycobacterium</taxon>
        <taxon>Mycobacterium tuberculosis complex</taxon>
    </lineage>
</organism>
<sequence length="114" mass="12776">MVAALHAGKAVTIAPQSMTLTTQQAADLLGVSRPTVVRLIKSGELAAERIGNRHRLVLDDVLAYREARRQRQYDALAESAMDIDADEDPEVICEQLREARRVVAARRRTERRRA</sequence>